<keyword id="KW-0975">Bacterial flagellum</keyword>
<keyword id="KW-1005">Bacterial flagellum biogenesis</keyword>
<keyword id="KW-1006">Bacterial flagellum protein export</keyword>
<keyword id="KW-1003">Cell membrane</keyword>
<keyword id="KW-0472">Membrane</keyword>
<keyword id="KW-0653">Protein transport</keyword>
<keyword id="KW-1185">Reference proteome</keyword>
<keyword id="KW-0812">Transmembrane</keyword>
<keyword id="KW-1133">Transmembrane helix</keyword>
<keyword id="KW-0813">Transport</keyword>
<keyword id="KW-0843">Virulence</keyword>
<comment type="function">
    <text>May be a component of the flagellum. It is required for normal cell division. May be implicated in the secretion of virulence factors.</text>
</comment>
<comment type="subcellular location">
    <subcellularLocation>
        <location evidence="3">Cell membrane</location>
        <topology evidence="3">Multi-pass membrane protein</topology>
    </subcellularLocation>
    <subcellularLocation>
        <location evidence="1">Bacterial flagellum basal body</location>
    </subcellularLocation>
</comment>
<comment type="similarity">
    <text evidence="3">Belongs to the FliP/MopC/SpaP family.</text>
</comment>
<gene>
    <name type="primary">fliP</name>
    <name type="ordered locus">CC_0951</name>
</gene>
<accession>Q45980</accession>
<dbReference type="EMBL" id="U20387">
    <property type="protein sequence ID" value="AAA86882.1"/>
    <property type="molecule type" value="Genomic_DNA"/>
</dbReference>
<dbReference type="EMBL" id="AE005673">
    <property type="protein sequence ID" value="AAK22935.1"/>
    <property type="molecule type" value="Genomic_DNA"/>
</dbReference>
<dbReference type="PIR" id="C87367">
    <property type="entry name" value="C87367"/>
</dbReference>
<dbReference type="RefSeq" id="NP_419767.1">
    <property type="nucleotide sequence ID" value="NC_002696.2"/>
</dbReference>
<dbReference type="RefSeq" id="WP_010918835.1">
    <property type="nucleotide sequence ID" value="NC_002696.2"/>
</dbReference>
<dbReference type="SMR" id="Q45980"/>
<dbReference type="STRING" id="190650.CC_0951"/>
<dbReference type="EnsemblBacteria" id="AAK22935">
    <property type="protein sequence ID" value="AAK22935"/>
    <property type="gene ID" value="CC_0951"/>
</dbReference>
<dbReference type="KEGG" id="ccr:CC_0951"/>
<dbReference type="PATRIC" id="fig|190650.5.peg.966"/>
<dbReference type="eggNOG" id="COG1338">
    <property type="taxonomic scope" value="Bacteria"/>
</dbReference>
<dbReference type="HOGENOM" id="CLU_042028_0_0_5"/>
<dbReference type="BioCyc" id="CAULO:CC0951-MONOMER"/>
<dbReference type="Proteomes" id="UP000001816">
    <property type="component" value="Chromosome"/>
</dbReference>
<dbReference type="GO" id="GO:0009425">
    <property type="term" value="C:bacterial-type flagellum basal body"/>
    <property type="evidence" value="ECO:0007669"/>
    <property type="project" value="UniProtKB-SubCell"/>
</dbReference>
<dbReference type="GO" id="GO:0005886">
    <property type="term" value="C:plasma membrane"/>
    <property type="evidence" value="ECO:0007669"/>
    <property type="project" value="UniProtKB-SubCell"/>
</dbReference>
<dbReference type="GO" id="GO:0044781">
    <property type="term" value="P:bacterial-type flagellum organization"/>
    <property type="evidence" value="ECO:0007669"/>
    <property type="project" value="UniProtKB-KW"/>
</dbReference>
<dbReference type="GO" id="GO:0009306">
    <property type="term" value="P:protein secretion"/>
    <property type="evidence" value="ECO:0007669"/>
    <property type="project" value="InterPro"/>
</dbReference>
<dbReference type="InterPro" id="IPR005837">
    <property type="entry name" value="FliP"/>
</dbReference>
<dbReference type="InterPro" id="IPR005838">
    <property type="entry name" value="T3SS_IM_P"/>
</dbReference>
<dbReference type="NCBIfam" id="TIGR01103">
    <property type="entry name" value="fliP"/>
    <property type="match status" value="1"/>
</dbReference>
<dbReference type="NCBIfam" id="NF009438">
    <property type="entry name" value="PRK12797.1"/>
    <property type="match status" value="1"/>
</dbReference>
<dbReference type="PANTHER" id="PTHR30587">
    <property type="entry name" value="FLAGELLAR BIOSYNTHETIC PROTEIN FLIP"/>
    <property type="match status" value="1"/>
</dbReference>
<dbReference type="PANTHER" id="PTHR30587:SF0">
    <property type="entry name" value="FLAGELLAR BIOSYNTHETIC PROTEIN FLIP"/>
    <property type="match status" value="1"/>
</dbReference>
<dbReference type="Pfam" id="PF00813">
    <property type="entry name" value="FliP"/>
    <property type="match status" value="1"/>
</dbReference>
<dbReference type="PRINTS" id="PR00951">
    <property type="entry name" value="FLGBIOSNFLIP"/>
</dbReference>
<dbReference type="PRINTS" id="PR01302">
    <property type="entry name" value="TYPE3IMPPROT"/>
</dbReference>
<dbReference type="PROSITE" id="PS01060">
    <property type="entry name" value="FLIP_1"/>
    <property type="match status" value="1"/>
</dbReference>
<dbReference type="PROSITE" id="PS01061">
    <property type="entry name" value="FLIP_2"/>
    <property type="match status" value="1"/>
</dbReference>
<feature type="chain" id="PRO_0000191984" description="Flagellar biosynthetic protein FliP">
    <location>
        <begin position="1"/>
        <end position="266"/>
    </location>
</feature>
<feature type="transmembrane region" description="Helical" evidence="2">
    <location>
        <begin position="20"/>
        <end position="40"/>
    </location>
</feature>
<feature type="transmembrane region" description="Helical" evidence="2">
    <location>
        <begin position="58"/>
        <end position="78"/>
    </location>
</feature>
<feature type="transmembrane region" description="Helical" evidence="2">
    <location>
        <begin position="102"/>
        <end position="122"/>
    </location>
</feature>
<feature type="transmembrane region" description="Helical" evidence="2">
    <location>
        <begin position="202"/>
        <end position="222"/>
    </location>
</feature>
<feature type="transmembrane region" description="Helical" evidence="2">
    <location>
        <begin position="226"/>
        <end position="246"/>
    </location>
</feature>
<name>FLIP_CAUVC</name>
<proteinExistence type="inferred from homology"/>
<sequence length="266" mass="28527">MIRDLFKSVIGAKAEDLRRAAIISVLAAIACAIMPAAAMAQSAVNINLGTGAGLTERVVQLVGLMTVLSLAPSIVIMTTSFVRIVVVLGLLRTAIGVQQSPPNPVLISLALFLTAIVMAPTFERSYDAGIKPLLDQQMELPEAFEAASGPVKQFMLSQVDRDDLALFVRLSKIPQPRTAAETPLRVVTPAFMISELKRAFEIGFLLFIPFLVIDLVVASVLMSMGMMMLPPASISLPFKLIFFVLVDGWRLVAGSLVESFQRGAGG</sequence>
<protein>
    <recommendedName>
        <fullName>Flagellar biosynthetic protein FliP</fullName>
    </recommendedName>
</protein>
<evidence type="ECO:0000250" key="1"/>
<evidence type="ECO:0000255" key="2"/>
<evidence type="ECO:0000305" key="3"/>
<reference key="1">
    <citation type="journal article" date="1995" name="J. Bacteriol.">
        <title>Temporal and spatial regulation of fliP, an early flagellar gene of Caulobacter crescentus that is required for motility and normal cell division.</title>
        <authorList>
            <person name="Gober J.W."/>
            <person name="Boyd C.H."/>
            <person name="Jarvis M."/>
            <person name="Mangan E.K."/>
            <person name="Rizzo M.F."/>
            <person name="Wingrove J.A."/>
        </authorList>
    </citation>
    <scope>NUCLEOTIDE SEQUENCE [GENOMIC DNA]</scope>
    <source>
        <strain>ATCC 19089 / CIP 103742 / CB 15</strain>
    </source>
</reference>
<reference key="2">
    <citation type="journal article" date="2001" name="Proc. Natl. Acad. Sci. U.S.A.">
        <title>Complete genome sequence of Caulobacter crescentus.</title>
        <authorList>
            <person name="Nierman W.C."/>
            <person name="Feldblyum T.V."/>
            <person name="Laub M.T."/>
            <person name="Paulsen I.T."/>
            <person name="Nelson K.E."/>
            <person name="Eisen J.A."/>
            <person name="Heidelberg J.F."/>
            <person name="Alley M.R.K."/>
            <person name="Ohta N."/>
            <person name="Maddock J.R."/>
            <person name="Potocka I."/>
            <person name="Nelson W.C."/>
            <person name="Newton A."/>
            <person name="Stephens C."/>
            <person name="Phadke N.D."/>
            <person name="Ely B."/>
            <person name="DeBoy R.T."/>
            <person name="Dodson R.J."/>
            <person name="Durkin A.S."/>
            <person name="Gwinn M.L."/>
            <person name="Haft D.H."/>
            <person name="Kolonay J.F."/>
            <person name="Smit J."/>
            <person name="Craven M.B."/>
            <person name="Khouri H.M."/>
            <person name="Shetty J."/>
            <person name="Berry K.J."/>
            <person name="Utterback T.R."/>
            <person name="Tran K."/>
            <person name="Wolf A.M."/>
            <person name="Vamathevan J.J."/>
            <person name="Ermolaeva M.D."/>
            <person name="White O."/>
            <person name="Salzberg S.L."/>
            <person name="Venter J.C."/>
            <person name="Shapiro L."/>
            <person name="Fraser C.M."/>
        </authorList>
    </citation>
    <scope>NUCLEOTIDE SEQUENCE [LARGE SCALE GENOMIC DNA]</scope>
    <source>
        <strain>ATCC 19089 / CIP 103742 / CB 15</strain>
    </source>
</reference>
<organism>
    <name type="scientific">Caulobacter vibrioides (strain ATCC 19089 / CIP 103742 / CB 15)</name>
    <name type="common">Caulobacter crescentus</name>
    <dbReference type="NCBI Taxonomy" id="190650"/>
    <lineage>
        <taxon>Bacteria</taxon>
        <taxon>Pseudomonadati</taxon>
        <taxon>Pseudomonadota</taxon>
        <taxon>Alphaproteobacteria</taxon>
        <taxon>Caulobacterales</taxon>
        <taxon>Caulobacteraceae</taxon>
        <taxon>Caulobacter</taxon>
    </lineage>
</organism>